<organismHost>
    <name type="scientific">Acanthamoeba polyphaga</name>
    <name type="common">Amoeba</name>
    <dbReference type="NCBI Taxonomy" id="5757"/>
</organismHost>
<proteinExistence type="inferred from homology"/>
<protein>
    <recommendedName>
        <fullName>DNA-directed RNA polymerase subunit 6</fullName>
        <ecNumber>2.7.7.6</ecNumber>
    </recommendedName>
</protein>
<dbReference type="EC" id="2.7.7.6"/>
<dbReference type="EMBL" id="AY653733">
    <property type="protein sequence ID" value="AAV50482.1"/>
    <property type="molecule type" value="Genomic_DNA"/>
</dbReference>
<dbReference type="SMR" id="Q5UQ32"/>
<dbReference type="BRENDA" id="2.7.7.6">
    <property type="organism ID" value="9231"/>
</dbReference>
<dbReference type="Proteomes" id="UP000001134">
    <property type="component" value="Genome"/>
</dbReference>
<dbReference type="GO" id="GO:0000428">
    <property type="term" value="C:DNA-directed RNA polymerase complex"/>
    <property type="evidence" value="ECO:0007669"/>
    <property type="project" value="UniProtKB-KW"/>
</dbReference>
<dbReference type="GO" id="GO:0003677">
    <property type="term" value="F:DNA binding"/>
    <property type="evidence" value="ECO:0007669"/>
    <property type="project" value="InterPro"/>
</dbReference>
<dbReference type="GO" id="GO:0003899">
    <property type="term" value="F:DNA-directed RNA polymerase activity"/>
    <property type="evidence" value="ECO:0007669"/>
    <property type="project" value="UniProtKB-EC"/>
</dbReference>
<dbReference type="GO" id="GO:0006360">
    <property type="term" value="P:transcription by RNA polymerase I"/>
    <property type="evidence" value="ECO:0007669"/>
    <property type="project" value="TreeGrafter"/>
</dbReference>
<dbReference type="GO" id="GO:0006366">
    <property type="term" value="P:transcription by RNA polymerase II"/>
    <property type="evidence" value="ECO:0007669"/>
    <property type="project" value="TreeGrafter"/>
</dbReference>
<dbReference type="GO" id="GO:0042797">
    <property type="term" value="P:tRNA transcription by RNA polymerase III"/>
    <property type="evidence" value="ECO:0007669"/>
    <property type="project" value="TreeGrafter"/>
</dbReference>
<dbReference type="Gene3D" id="3.90.940.10">
    <property type="match status" value="1"/>
</dbReference>
<dbReference type="InterPro" id="IPR006110">
    <property type="entry name" value="Pol_omega/Rpo6/RPB6"/>
</dbReference>
<dbReference type="InterPro" id="IPR036161">
    <property type="entry name" value="RPB6/omega-like_sf"/>
</dbReference>
<dbReference type="PANTHER" id="PTHR47227">
    <property type="entry name" value="DNA-DIRECTED RNA POLYMERASE SUBUNIT K"/>
    <property type="match status" value="1"/>
</dbReference>
<dbReference type="PANTHER" id="PTHR47227:SF5">
    <property type="entry name" value="DNA-DIRECTED RNA POLYMERASES I, II, AND III SUBUNIT RPABC2"/>
    <property type="match status" value="1"/>
</dbReference>
<dbReference type="Pfam" id="PF01192">
    <property type="entry name" value="RNA_pol_Rpb6"/>
    <property type="match status" value="1"/>
</dbReference>
<dbReference type="SUPFAM" id="SSF63562">
    <property type="entry name" value="RPB6/omega subunit-like"/>
    <property type="match status" value="1"/>
</dbReference>
<evidence type="ECO:0000250" key="1"/>
<evidence type="ECO:0000256" key="2">
    <source>
        <dbReference type="SAM" id="MobiDB-lite"/>
    </source>
</evidence>
<evidence type="ECO:0000305" key="3"/>
<name>RPO6_MIMIV</name>
<gene>
    <name type="ordered locus">MIMI_R209</name>
</gene>
<keyword id="KW-0240">DNA-directed RNA polymerase</keyword>
<keyword id="KW-0548">Nucleotidyltransferase</keyword>
<keyword id="KW-1185">Reference proteome</keyword>
<keyword id="KW-0804">Transcription</keyword>
<keyword id="KW-0808">Transferase</keyword>
<organism>
    <name type="scientific">Acanthamoeba polyphaga mimivirus</name>
    <name type="common">APMV</name>
    <dbReference type="NCBI Taxonomy" id="212035"/>
    <lineage>
        <taxon>Viruses</taxon>
        <taxon>Varidnaviria</taxon>
        <taxon>Bamfordvirae</taxon>
        <taxon>Nucleocytoviricota</taxon>
        <taxon>Megaviricetes</taxon>
        <taxon>Imitervirales</taxon>
        <taxon>Mimiviridae</taxon>
        <taxon>Megamimivirinae</taxon>
        <taxon>Mimivirus</taxon>
        <taxon>Mimivirus bradfordmassiliense</taxon>
    </lineage>
</organism>
<accession>Q5UQ32</accession>
<sequence>MSSKKGSKTSKTSRSVKQTEEYYDDDAEFQNSEDEYPPSDEDLDNSGGSDDENTQSGGLSDAPDDELGEDSATLDIDPDDEAEYDTDGDEKFNPIDEMGEPEDPDDPSEQEEDEVEDLGSEDVDNVEIEDDAADIEDLDPELVDEARNSKSKQCYMKNLNKDFIALDEDDSGIYSKIEYKKIPDNERETDPILTYYEIVRILGTRAQQFNYGAKPLIKGVEGMHPAKMAFVELTAKMTSFIVRRHLPGKKYEDWRIDELGMIHTITEELFVPDNFNWDSITALHKTMISNQQKNSTTDTETLSTQENASTRVSGSNLRSRSGSKSSKSNNSRSASKSNSRTESKSNSRTGSKSNSRTGSKSNSRTGSKSKKSSNTKSKSKRNSDNSDDSDYSDYSE</sequence>
<feature type="chain" id="PRO_0000133807" description="DNA-directed RNA polymerase subunit 6">
    <location>
        <begin position="1"/>
        <end position="396"/>
    </location>
</feature>
<feature type="region of interest" description="Disordered" evidence="2">
    <location>
        <begin position="1"/>
        <end position="137"/>
    </location>
</feature>
<feature type="region of interest" description="Disordered" evidence="2">
    <location>
        <begin position="290"/>
        <end position="396"/>
    </location>
</feature>
<feature type="compositionally biased region" description="Acidic residues" evidence="2">
    <location>
        <begin position="21"/>
        <end position="53"/>
    </location>
</feature>
<feature type="compositionally biased region" description="Acidic residues" evidence="2">
    <location>
        <begin position="76"/>
        <end position="88"/>
    </location>
</feature>
<feature type="compositionally biased region" description="Acidic residues" evidence="2">
    <location>
        <begin position="97"/>
        <end position="137"/>
    </location>
</feature>
<feature type="compositionally biased region" description="Polar residues" evidence="2">
    <location>
        <begin position="290"/>
        <end position="312"/>
    </location>
</feature>
<feature type="compositionally biased region" description="Low complexity" evidence="2">
    <location>
        <begin position="313"/>
        <end position="338"/>
    </location>
</feature>
<feature type="compositionally biased region" description="Low complexity" evidence="2">
    <location>
        <begin position="346"/>
        <end position="366"/>
    </location>
</feature>
<feature type="compositionally biased region" description="Basic residues" evidence="2">
    <location>
        <begin position="367"/>
        <end position="380"/>
    </location>
</feature>
<feature type="compositionally biased region" description="Acidic residues" evidence="2">
    <location>
        <begin position="385"/>
        <end position="396"/>
    </location>
</feature>
<reference key="1">
    <citation type="journal article" date="2004" name="Science">
        <title>The 1.2-megabase genome sequence of Mimivirus.</title>
        <authorList>
            <person name="Raoult D."/>
            <person name="Audic S."/>
            <person name="Robert C."/>
            <person name="Abergel C."/>
            <person name="Renesto P."/>
            <person name="Ogata H."/>
            <person name="La Scola B."/>
            <person name="Susan M."/>
            <person name="Claverie J.-M."/>
        </authorList>
    </citation>
    <scope>NUCLEOTIDE SEQUENCE [LARGE SCALE GENOMIC DNA]</scope>
    <source>
        <strain>Rowbotham-Bradford</strain>
    </source>
</reference>
<comment type="function">
    <text evidence="1">DNA-dependent RNA polymerase catalyzes the transcription of DNA into RNA using the four ribonucleoside triphosphates as substrates.</text>
</comment>
<comment type="catalytic activity">
    <reaction>
        <text>RNA(n) + a ribonucleoside 5'-triphosphate = RNA(n+1) + diphosphate</text>
        <dbReference type="Rhea" id="RHEA:21248"/>
        <dbReference type="Rhea" id="RHEA-COMP:14527"/>
        <dbReference type="Rhea" id="RHEA-COMP:17342"/>
        <dbReference type="ChEBI" id="CHEBI:33019"/>
        <dbReference type="ChEBI" id="CHEBI:61557"/>
        <dbReference type="ChEBI" id="CHEBI:140395"/>
        <dbReference type="EC" id="2.7.7.6"/>
    </reaction>
</comment>
<comment type="similarity">
    <text evidence="3">Belongs to the archaeal Rpo6/eukaryotic RPB6 RNA polymerase subunit family.</text>
</comment>